<protein>
    <recommendedName>
        <fullName evidence="1">4-hydroxy-2-oxovalerate aldolase 2</fullName>
        <shortName evidence="1">HOA 2</shortName>
        <ecNumber evidence="1">4.1.3.39</ecNumber>
    </recommendedName>
    <alternativeName>
        <fullName evidence="1">4-hydroxy-2-keto-pentanoic acid aldolase 2</fullName>
    </alternativeName>
    <alternativeName>
        <fullName evidence="1">4-hydroxy-2-oxopentanoate aldolase 2</fullName>
    </alternativeName>
</protein>
<proteinExistence type="inferred from homology"/>
<keyword id="KW-0058">Aromatic hydrocarbons catabolism</keyword>
<keyword id="KW-0456">Lyase</keyword>
<keyword id="KW-0464">Manganese</keyword>
<keyword id="KW-0479">Metal-binding</keyword>
<gene>
    <name type="ordered locus">BceJ2315_55580</name>
    <name type="ORF">BCAM2121</name>
</gene>
<organism>
    <name type="scientific">Burkholderia cenocepacia (strain ATCC BAA-245 / DSM 16553 / LMG 16656 / NCTC 13227 / J2315 / CF5610)</name>
    <name type="common">Burkholderia cepacia (strain J2315)</name>
    <dbReference type="NCBI Taxonomy" id="216591"/>
    <lineage>
        <taxon>Bacteria</taxon>
        <taxon>Pseudomonadati</taxon>
        <taxon>Pseudomonadota</taxon>
        <taxon>Betaproteobacteria</taxon>
        <taxon>Burkholderiales</taxon>
        <taxon>Burkholderiaceae</taxon>
        <taxon>Burkholderia</taxon>
        <taxon>Burkholderia cepacia complex</taxon>
    </lineage>
</organism>
<dbReference type="EC" id="4.1.3.39" evidence="1"/>
<dbReference type="EMBL" id="AM747721">
    <property type="protein sequence ID" value="CAR55979.1"/>
    <property type="molecule type" value="Genomic_DNA"/>
</dbReference>
<dbReference type="SMR" id="B4EFI7"/>
<dbReference type="KEGG" id="bcj:BCAM2121"/>
<dbReference type="eggNOG" id="COG0119">
    <property type="taxonomic scope" value="Bacteria"/>
</dbReference>
<dbReference type="HOGENOM" id="CLU_049173_0_0_4"/>
<dbReference type="BioCyc" id="BCEN216591:G1G1V-6190-MONOMER"/>
<dbReference type="Proteomes" id="UP000001035">
    <property type="component" value="Chromosome 2"/>
</dbReference>
<dbReference type="GO" id="GO:0003852">
    <property type="term" value="F:2-isopropylmalate synthase activity"/>
    <property type="evidence" value="ECO:0007669"/>
    <property type="project" value="TreeGrafter"/>
</dbReference>
<dbReference type="GO" id="GO:0008701">
    <property type="term" value="F:4-hydroxy-2-oxovalerate aldolase activity"/>
    <property type="evidence" value="ECO:0007669"/>
    <property type="project" value="UniProtKB-UniRule"/>
</dbReference>
<dbReference type="GO" id="GO:0030145">
    <property type="term" value="F:manganese ion binding"/>
    <property type="evidence" value="ECO:0007669"/>
    <property type="project" value="UniProtKB-UniRule"/>
</dbReference>
<dbReference type="GO" id="GO:0009056">
    <property type="term" value="P:catabolic process"/>
    <property type="evidence" value="ECO:0007669"/>
    <property type="project" value="UniProtKB-KW"/>
</dbReference>
<dbReference type="GO" id="GO:0009098">
    <property type="term" value="P:L-leucine biosynthetic process"/>
    <property type="evidence" value="ECO:0007669"/>
    <property type="project" value="TreeGrafter"/>
</dbReference>
<dbReference type="CDD" id="cd07943">
    <property type="entry name" value="DRE_TIM_HOA"/>
    <property type="match status" value="1"/>
</dbReference>
<dbReference type="FunFam" id="1.10.8.60:FF:000042">
    <property type="entry name" value="4-hydroxy-2-oxovalerate aldolase"/>
    <property type="match status" value="1"/>
</dbReference>
<dbReference type="Gene3D" id="1.10.8.60">
    <property type="match status" value="1"/>
</dbReference>
<dbReference type="Gene3D" id="3.20.20.70">
    <property type="entry name" value="Aldolase class I"/>
    <property type="match status" value="1"/>
</dbReference>
<dbReference type="HAMAP" id="MF_01656">
    <property type="entry name" value="HOA"/>
    <property type="match status" value="1"/>
</dbReference>
<dbReference type="InterPro" id="IPR050073">
    <property type="entry name" value="2-IPM_HCS-like"/>
</dbReference>
<dbReference type="InterPro" id="IPR017629">
    <property type="entry name" value="4OH_2_O-val_aldolase"/>
</dbReference>
<dbReference type="InterPro" id="IPR013785">
    <property type="entry name" value="Aldolase_TIM"/>
</dbReference>
<dbReference type="InterPro" id="IPR012425">
    <property type="entry name" value="DmpG_comm"/>
</dbReference>
<dbReference type="InterPro" id="IPR035685">
    <property type="entry name" value="DRE_TIM_HOA"/>
</dbReference>
<dbReference type="InterPro" id="IPR000891">
    <property type="entry name" value="PYR_CT"/>
</dbReference>
<dbReference type="NCBIfam" id="TIGR03217">
    <property type="entry name" value="4OH_2_O_val_ald"/>
    <property type="match status" value="1"/>
</dbReference>
<dbReference type="NCBIfam" id="NF006049">
    <property type="entry name" value="PRK08195.1"/>
    <property type="match status" value="1"/>
</dbReference>
<dbReference type="PANTHER" id="PTHR10277:SF9">
    <property type="entry name" value="2-ISOPROPYLMALATE SYNTHASE 1, CHLOROPLASTIC-RELATED"/>
    <property type="match status" value="1"/>
</dbReference>
<dbReference type="PANTHER" id="PTHR10277">
    <property type="entry name" value="HOMOCITRATE SYNTHASE-RELATED"/>
    <property type="match status" value="1"/>
</dbReference>
<dbReference type="Pfam" id="PF07836">
    <property type="entry name" value="DmpG_comm"/>
    <property type="match status" value="1"/>
</dbReference>
<dbReference type="Pfam" id="PF00682">
    <property type="entry name" value="HMGL-like"/>
    <property type="match status" value="1"/>
</dbReference>
<dbReference type="SUPFAM" id="SSF51569">
    <property type="entry name" value="Aldolase"/>
    <property type="match status" value="1"/>
</dbReference>
<dbReference type="SUPFAM" id="SSF89000">
    <property type="entry name" value="post-HMGL domain-like"/>
    <property type="match status" value="1"/>
</dbReference>
<dbReference type="PROSITE" id="PS50991">
    <property type="entry name" value="PYR_CT"/>
    <property type="match status" value="1"/>
</dbReference>
<evidence type="ECO:0000255" key="1">
    <source>
        <dbReference type="HAMAP-Rule" id="MF_01656"/>
    </source>
</evidence>
<comment type="catalytic activity">
    <reaction evidence="1">
        <text>(S)-4-hydroxy-2-oxopentanoate = acetaldehyde + pyruvate</text>
        <dbReference type="Rhea" id="RHEA:22624"/>
        <dbReference type="ChEBI" id="CHEBI:15343"/>
        <dbReference type="ChEBI" id="CHEBI:15361"/>
        <dbReference type="ChEBI" id="CHEBI:73143"/>
        <dbReference type="EC" id="4.1.3.39"/>
    </reaction>
</comment>
<comment type="similarity">
    <text evidence="1">Belongs to the 4-hydroxy-2-oxovalerate aldolase family.</text>
</comment>
<name>HOA2_BURCJ</name>
<sequence>MNSAEKKLYISDVTLRDGSHAIRHQYSVDHVRAIAAALDDAGVDSIEVAHGDGLQGSSFNYGFGAHTDVEWIAAAAQSVKKAKIATLLIPGIGTTHDLRHAFDAGARVVRVATHCTEADVSRQHLDFARELGMDAVGFLMMSHMTTPQKLAEQAKMMETFGATCVYVVDSGGALGMNEVRDRFRALKAVLKSDTQTGMHAHHNLSLGVANSLVAVEEGCDRIDASLAGMGAGAGNAPLEVFIAAAQRQGWNHGCDLYRLMDAADDLVRPLQDRPVRVDRETLALGFAGVYSSFLRHAEVAAGKYGLKTVDILVELGRRKMVGGQEDMIVDVALDLLKRQQPIMSDAH</sequence>
<feature type="chain" id="PRO_0000387794" description="4-hydroxy-2-oxovalerate aldolase 2">
    <location>
        <begin position="1"/>
        <end position="347"/>
    </location>
</feature>
<feature type="domain" description="Pyruvate carboxyltransferase" evidence="1">
    <location>
        <begin position="8"/>
        <end position="260"/>
    </location>
</feature>
<feature type="active site" description="Proton acceptor" evidence="1">
    <location>
        <position position="20"/>
    </location>
</feature>
<feature type="binding site" evidence="1">
    <location>
        <begin position="16"/>
        <end position="17"/>
    </location>
    <ligand>
        <name>substrate</name>
    </ligand>
</feature>
<feature type="binding site" evidence="1">
    <location>
        <position position="17"/>
    </location>
    <ligand>
        <name>Mn(2+)</name>
        <dbReference type="ChEBI" id="CHEBI:29035"/>
    </ligand>
</feature>
<feature type="binding site" evidence="1">
    <location>
        <position position="170"/>
    </location>
    <ligand>
        <name>substrate</name>
    </ligand>
</feature>
<feature type="binding site" evidence="1">
    <location>
        <position position="199"/>
    </location>
    <ligand>
        <name>Mn(2+)</name>
        <dbReference type="ChEBI" id="CHEBI:29035"/>
    </ligand>
</feature>
<feature type="binding site" evidence="1">
    <location>
        <position position="199"/>
    </location>
    <ligand>
        <name>substrate</name>
    </ligand>
</feature>
<feature type="binding site" evidence="1">
    <location>
        <position position="201"/>
    </location>
    <ligand>
        <name>Mn(2+)</name>
        <dbReference type="ChEBI" id="CHEBI:29035"/>
    </ligand>
</feature>
<feature type="binding site" evidence="1">
    <location>
        <position position="290"/>
    </location>
    <ligand>
        <name>substrate</name>
    </ligand>
</feature>
<feature type="site" description="Transition state stabilizer" evidence="1">
    <location>
        <position position="16"/>
    </location>
</feature>
<reference key="1">
    <citation type="journal article" date="2009" name="J. Bacteriol.">
        <title>The genome of Burkholderia cenocepacia J2315, an epidemic pathogen of cystic fibrosis patients.</title>
        <authorList>
            <person name="Holden M.T."/>
            <person name="Seth-Smith H.M."/>
            <person name="Crossman L.C."/>
            <person name="Sebaihia M."/>
            <person name="Bentley S.D."/>
            <person name="Cerdeno-Tarraga A.M."/>
            <person name="Thomson N.R."/>
            <person name="Bason N."/>
            <person name="Quail M.A."/>
            <person name="Sharp S."/>
            <person name="Cherevach I."/>
            <person name="Churcher C."/>
            <person name="Goodhead I."/>
            <person name="Hauser H."/>
            <person name="Holroyd N."/>
            <person name="Mungall K."/>
            <person name="Scott P."/>
            <person name="Walker D."/>
            <person name="White B."/>
            <person name="Rose H."/>
            <person name="Iversen P."/>
            <person name="Mil-Homens D."/>
            <person name="Rocha E.P."/>
            <person name="Fialho A.M."/>
            <person name="Baldwin A."/>
            <person name="Dowson C."/>
            <person name="Barrell B.G."/>
            <person name="Govan J.R."/>
            <person name="Vandamme P."/>
            <person name="Hart C.A."/>
            <person name="Mahenthiralingam E."/>
            <person name="Parkhill J."/>
        </authorList>
    </citation>
    <scope>NUCLEOTIDE SEQUENCE [LARGE SCALE GENOMIC DNA]</scope>
    <source>
        <strain>ATCC BAA-245 / DSM 16553 / LMG 16656 / NCTC 13227 / J2315 / CF5610</strain>
    </source>
</reference>
<accession>B4EFI7</accession>